<gene>
    <name type="primary">cryg5</name>
    <name type="synonym">gcry5</name>
</gene>
<reference key="1">
    <citation type="journal article" date="1993" name="Gene">
        <title>Characterization of Xenopus laevis gamma-crystallin-encoding genes.</title>
        <authorList>
            <person name="Smolich B.D."/>
            <person name="Tarkington S.K."/>
            <person name="Saha M.S."/>
            <person name="Stathakis D.G."/>
            <person name="Grainger R.M."/>
        </authorList>
    </citation>
    <scope>NUCLEOTIDE SEQUENCE [GENOMIC DNA]</scope>
</reference>
<organism>
    <name type="scientific">Xenopus laevis</name>
    <name type="common">African clawed frog</name>
    <dbReference type="NCBI Taxonomy" id="8355"/>
    <lineage>
        <taxon>Eukaryota</taxon>
        <taxon>Metazoa</taxon>
        <taxon>Chordata</taxon>
        <taxon>Craniata</taxon>
        <taxon>Vertebrata</taxon>
        <taxon>Euteleostomi</taxon>
        <taxon>Amphibia</taxon>
        <taxon>Batrachia</taxon>
        <taxon>Anura</taxon>
        <taxon>Pipoidea</taxon>
        <taxon>Pipidae</taxon>
        <taxon>Xenopodinae</taxon>
        <taxon>Xenopus</taxon>
        <taxon>Xenopus</taxon>
    </lineage>
</organism>
<feature type="chain" id="PRO_0000057605" description="Gamma-crystallin-5">
    <location>
        <begin position="1" status="less than"/>
        <end position="132"/>
    </location>
</feature>
<feature type="domain" description="Beta/gamma crystallin 'Greek key' 2" evidence="2">
    <location>
        <begin position="1" status="less than"/>
        <end position="40"/>
    </location>
</feature>
<feature type="domain" description="Beta/gamma crystallin 'Greek key' 3" evidence="2">
    <location>
        <begin position="46"/>
        <end position="86"/>
    </location>
</feature>
<feature type="domain" description="Beta/gamma crystallin 'Greek key' 4" evidence="2">
    <location>
        <begin position="87"/>
        <end position="129"/>
    </location>
</feature>
<feature type="region of interest" description="Connecting peptide">
    <location>
        <begin position="41"/>
        <end position="45"/>
    </location>
</feature>
<feature type="non-terminal residue">
    <location>
        <position position="1"/>
    </location>
</feature>
<proteinExistence type="inferred from homology"/>
<accession>Q06255</accession>
<name>CRG5_XENLA</name>
<comment type="function">
    <text>Crystallins are the dominant structural components of the vertebrate eye lens.</text>
</comment>
<comment type="subunit">
    <text evidence="1">Monomer.</text>
</comment>
<comment type="domain">
    <text>Has a two-domain beta-structure, folded into four very similar Greek key motifs.</text>
</comment>
<comment type="similarity">
    <text evidence="3">Belongs to the beta/gamma-crystallin family.</text>
</comment>
<evidence type="ECO:0000250" key="1"/>
<evidence type="ECO:0000255" key="2">
    <source>
        <dbReference type="PROSITE-ProRule" id="PRU00028"/>
    </source>
</evidence>
<evidence type="ECO:0000305" key="3"/>
<dbReference type="EMBL" id="M99583">
    <property type="protein sequence ID" value="AAA49694.1"/>
    <property type="molecule type" value="Genomic_DNA"/>
</dbReference>
<dbReference type="PIR" id="PN0546">
    <property type="entry name" value="PN0546"/>
</dbReference>
<dbReference type="SMR" id="Q06255"/>
<dbReference type="AGR" id="Xenbase:XB-GENE-22169763"/>
<dbReference type="Xenbase" id="XB-GENE-22169763">
    <property type="gene designation" value="crygbl.7.S"/>
</dbReference>
<dbReference type="Proteomes" id="UP000186698">
    <property type="component" value="Unplaced"/>
</dbReference>
<dbReference type="GO" id="GO:0005212">
    <property type="term" value="F:structural constituent of eye lens"/>
    <property type="evidence" value="ECO:0000318"/>
    <property type="project" value="GO_Central"/>
</dbReference>
<dbReference type="GO" id="GO:0002088">
    <property type="term" value="P:lens development in camera-type eye"/>
    <property type="evidence" value="ECO:0000318"/>
    <property type="project" value="GO_Central"/>
</dbReference>
<dbReference type="GO" id="GO:0007601">
    <property type="term" value="P:visual perception"/>
    <property type="evidence" value="ECO:0000318"/>
    <property type="project" value="GO_Central"/>
</dbReference>
<dbReference type="FunFam" id="2.60.20.10:FF:000003">
    <property type="entry name" value="Crystallin gamma S"/>
    <property type="match status" value="1"/>
</dbReference>
<dbReference type="Gene3D" id="2.60.20.10">
    <property type="entry name" value="Crystallins"/>
    <property type="match status" value="2"/>
</dbReference>
<dbReference type="InterPro" id="IPR050252">
    <property type="entry name" value="Beta/Gamma-Crystallin"/>
</dbReference>
<dbReference type="InterPro" id="IPR001064">
    <property type="entry name" value="Beta/gamma_crystallin"/>
</dbReference>
<dbReference type="InterPro" id="IPR011024">
    <property type="entry name" value="G_crystallin-like"/>
</dbReference>
<dbReference type="PANTHER" id="PTHR11818">
    <property type="entry name" value="BETA/GAMMA CRYSTALLIN"/>
    <property type="match status" value="1"/>
</dbReference>
<dbReference type="PANTHER" id="PTHR11818:SF133">
    <property type="entry name" value="GAMMA-CRYSTALLIN-3"/>
    <property type="match status" value="1"/>
</dbReference>
<dbReference type="Pfam" id="PF00030">
    <property type="entry name" value="Crystall"/>
    <property type="match status" value="2"/>
</dbReference>
<dbReference type="PRINTS" id="PR01367">
    <property type="entry name" value="BGCRYSTALLIN"/>
</dbReference>
<dbReference type="SMART" id="SM00247">
    <property type="entry name" value="XTALbg"/>
    <property type="match status" value="2"/>
</dbReference>
<dbReference type="SUPFAM" id="SSF49695">
    <property type="entry name" value="gamma-Crystallin-like"/>
    <property type="match status" value="1"/>
</dbReference>
<dbReference type="PROSITE" id="PS50915">
    <property type="entry name" value="CRYSTALLIN_BETA_GAMMA"/>
    <property type="match status" value="3"/>
</dbReference>
<protein>
    <recommendedName>
        <fullName>Gamma-crystallin-5</fullName>
    </recommendedName>
    <alternativeName>
        <fullName>Gamma-5-CRY</fullName>
    </alternativeName>
    <alternativeName>
        <fullName>Gamma-crystallin V</fullName>
    </alternativeName>
</protein>
<keyword id="KW-0273">Eye lens protein</keyword>
<keyword id="KW-1185">Reference proteome</keyword>
<keyword id="KW-0677">Repeat</keyword>
<sequence>ILYEQPSYRGHQYYLWKGEYPDFQRWMGFNDSIRSCRMSPYHQGQYKMRIYERGDFQGQNMEFFEDCPNTYDRFRFRDIHSCNVFDGNWMFYEEPNYRGRQYYLRPGEYRRYSDWGASSARIGSFRRVHHLV</sequence>